<name>NRFA_STAA8</name>
<gene>
    <name type="primary">nfrA</name>
    <name type="ordered locus">SAOUHSC_00366</name>
</gene>
<organism>
    <name type="scientific">Staphylococcus aureus (strain NCTC 8325 / PS 47)</name>
    <dbReference type="NCBI Taxonomy" id="93061"/>
    <lineage>
        <taxon>Bacteria</taxon>
        <taxon>Bacillati</taxon>
        <taxon>Bacillota</taxon>
        <taxon>Bacilli</taxon>
        <taxon>Bacillales</taxon>
        <taxon>Staphylococcaceae</taxon>
        <taxon>Staphylococcus</taxon>
    </lineage>
</organism>
<dbReference type="EC" id="1.6.-.-"/>
<dbReference type="EMBL" id="CP000253">
    <property type="protein sequence ID" value="ABD29532.1"/>
    <property type="molecule type" value="Genomic_DNA"/>
</dbReference>
<dbReference type="RefSeq" id="YP_498955.1">
    <property type="nucleotide sequence ID" value="NC_007795.1"/>
</dbReference>
<dbReference type="SMR" id="Q2G0Z5"/>
<dbReference type="STRING" id="93061.SAOUHSC_00366"/>
<dbReference type="PaxDb" id="1280-SAXN108_0432"/>
<dbReference type="GeneID" id="3919785"/>
<dbReference type="KEGG" id="sao:SAOUHSC_00366"/>
<dbReference type="PATRIC" id="fig|93061.5.peg.336"/>
<dbReference type="eggNOG" id="COG0778">
    <property type="taxonomic scope" value="Bacteria"/>
</dbReference>
<dbReference type="HOGENOM" id="CLU_070764_0_0_9"/>
<dbReference type="OrthoDB" id="9775805at2"/>
<dbReference type="PRO" id="PR:Q2G0Z5"/>
<dbReference type="Proteomes" id="UP000008816">
    <property type="component" value="Chromosome"/>
</dbReference>
<dbReference type="GO" id="GO:0016491">
    <property type="term" value="F:oxidoreductase activity"/>
    <property type="evidence" value="ECO:0007669"/>
    <property type="project" value="UniProtKB-KW"/>
</dbReference>
<dbReference type="CDD" id="cd02146">
    <property type="entry name" value="NfsA-like"/>
    <property type="match status" value="1"/>
</dbReference>
<dbReference type="Gene3D" id="3.40.109.10">
    <property type="entry name" value="NADH Oxidase"/>
    <property type="match status" value="1"/>
</dbReference>
<dbReference type="InterPro" id="IPR016446">
    <property type="entry name" value="Flavin_OxRdtase_Frp"/>
</dbReference>
<dbReference type="InterPro" id="IPR029479">
    <property type="entry name" value="Nitroreductase"/>
</dbReference>
<dbReference type="InterPro" id="IPR000415">
    <property type="entry name" value="Nitroreductase-like"/>
</dbReference>
<dbReference type="NCBIfam" id="NF008033">
    <property type="entry name" value="PRK10765.1"/>
    <property type="match status" value="1"/>
</dbReference>
<dbReference type="PANTHER" id="PTHR43425:SF3">
    <property type="entry name" value="NADPH-DEPENDENT OXIDOREDUCTASE"/>
    <property type="match status" value="1"/>
</dbReference>
<dbReference type="PANTHER" id="PTHR43425">
    <property type="entry name" value="OXYGEN-INSENSITIVE NADPH NITROREDUCTASE"/>
    <property type="match status" value="1"/>
</dbReference>
<dbReference type="Pfam" id="PF00881">
    <property type="entry name" value="Nitroreductase"/>
    <property type="match status" value="1"/>
</dbReference>
<dbReference type="PIRSF" id="PIRSF005426">
    <property type="entry name" value="Frp"/>
    <property type="match status" value="1"/>
</dbReference>
<dbReference type="SUPFAM" id="SSF55469">
    <property type="entry name" value="FMN-dependent nitroreductase-like"/>
    <property type="match status" value="1"/>
</dbReference>
<sequence>MSEHVYNLVKKHHSVRKFKNKPLSEDVVKKLVEAGQSASTSSFLQAYSIIGIDDEKIKENLREVSGQPYVVENGYLFVFVIDYYRHHLVDQHAETDMENAYGSTEGLLVGAIDAALVAENIAVTAEDMGYGIVFLGSLRNDVERVREILDLPDYVFPVFGMAVGEPADDENGAAKPRLPFDHVFHHNKYHADKETQYAQMADYDQTISEYYDQRTNGNRKETWSQQIEMFLGNKARLDMLEQLQKSGLIQR</sequence>
<comment type="function">
    <text>Reduces FMN, organic nitro compounds and disulfide DTNB. Involved in maintenance of the cellular redox state and the disulfide stress response.</text>
</comment>
<comment type="cofactor">
    <cofactor>
        <name>FMN</name>
        <dbReference type="ChEBI" id="CHEBI:58210"/>
    </cofactor>
</comment>
<comment type="biophysicochemical properties">
    <kinetics>
        <KM>17 uM for NADPH</KM>
        <Vmax>16.0 umol/min/mg enzyme toward FMN (at 21 degrees Celsius and at pH 6.8 in the presence of 50 mM NaCl)</Vmax>
        <Vmax>20.0 umol/min/mg enzyme toward nitrofurazone (at 21 degrees Celsius and at pH 6.8 in the presence of 50 mM NaCl)</Vmax>
        <Vmax>15.0 umol/min/mg enzyme toward nitrofurantoin (at 21 degrees Celsius and at pH 6.8 in the presence of 50 mM NaCl)</Vmax>
        <Vmax>97.0 umol/min/mg enzyme toward ferricyanide (at 21 degrees Celsius and at pH 6.8 in the presence of 50 mM NaCl)</Vmax>
        <Vmax>0.12 umol/min/mg enzyme toward DTNB (at 21 degrees Celsius and at pH 6.8 in the presence of 50 mM NaCl)</Vmax>
    </kinetics>
</comment>
<comment type="induction">
    <text>By ethanol stress and disulfide stress.</text>
</comment>
<comment type="similarity">
    <text evidence="1">Belongs to the flavin oxidoreductase frp family.</text>
</comment>
<proteinExistence type="evidence at protein level"/>
<keyword id="KW-0285">Flavoprotein</keyword>
<keyword id="KW-0288">FMN</keyword>
<keyword id="KW-0521">NADP</keyword>
<keyword id="KW-0560">Oxidoreductase</keyword>
<keyword id="KW-1185">Reference proteome</keyword>
<feature type="chain" id="PRO_0000247968" description="NADPH-dependent oxidoreductase">
    <location>
        <begin position="1"/>
        <end position="251"/>
    </location>
</feature>
<protein>
    <recommendedName>
        <fullName>NADPH-dependent oxidoreductase</fullName>
        <ecNumber>1.6.-.-</ecNumber>
    </recommendedName>
</protein>
<evidence type="ECO:0000305" key="1"/>
<reference key="1">
    <citation type="book" date="2006" name="Gram positive pathogens, 2nd edition">
        <title>The Staphylococcus aureus NCTC 8325 genome.</title>
        <editorList>
            <person name="Fischetti V."/>
            <person name="Novick R."/>
            <person name="Ferretti J."/>
            <person name="Portnoy D."/>
            <person name="Rood J."/>
        </editorList>
        <authorList>
            <person name="Gillaspy A.F."/>
            <person name="Worrell V."/>
            <person name="Orvis J."/>
            <person name="Roe B.A."/>
            <person name="Dyer D.W."/>
            <person name="Iandolo J.J."/>
        </authorList>
    </citation>
    <scope>NUCLEOTIDE SEQUENCE [LARGE SCALE GENOMIC DNA]</scope>
    <source>
        <strain>NCTC 8325 / PS 47</strain>
    </source>
</reference>
<reference key="2">
    <citation type="journal article" date="2005" name="J. Bacteriol.">
        <title>Staphylococcus aureus NfrA (SA0367) is a flavin mononucleotide-dependent NADPH oxidase involved in oxidative stress response.</title>
        <authorList>
            <person name="Streker K."/>
            <person name="Freiberg C."/>
            <person name="Labischinski H."/>
            <person name="Hacker J."/>
            <person name="Ohlsen K."/>
        </authorList>
    </citation>
    <scope>CHARACTERIZATION</scope>
</reference>
<accession>Q2G0Z5</accession>